<evidence type="ECO:0000250" key="1">
    <source>
        <dbReference type="UniProtKB" id="Q8BH74"/>
    </source>
</evidence>
<evidence type="ECO:0000256" key="2">
    <source>
        <dbReference type="SAM" id="MobiDB-lite"/>
    </source>
</evidence>
<evidence type="ECO:0000269" key="3">
    <source>
    </source>
</evidence>
<evidence type="ECO:0000269" key="4">
    <source>
    </source>
</evidence>
<evidence type="ECO:0000269" key="5">
    <source>
    </source>
</evidence>
<evidence type="ECO:0000269" key="6">
    <source>
    </source>
</evidence>
<evidence type="ECO:0000269" key="7">
    <source>
    </source>
</evidence>
<evidence type="ECO:0000269" key="8">
    <source>
    </source>
</evidence>
<evidence type="ECO:0000269" key="9">
    <source>
    </source>
</evidence>
<evidence type="ECO:0000269" key="10">
    <source>
    </source>
</evidence>
<evidence type="ECO:0000269" key="11">
    <source>
    </source>
</evidence>
<evidence type="ECO:0000269" key="12">
    <source>
    </source>
</evidence>
<evidence type="ECO:0000269" key="13">
    <source>
    </source>
</evidence>
<evidence type="ECO:0000303" key="14">
    <source>
    </source>
</evidence>
<evidence type="ECO:0000303" key="15">
    <source>
    </source>
</evidence>
<evidence type="ECO:0000305" key="16"/>
<evidence type="ECO:0007744" key="17">
    <source>
    </source>
</evidence>
<evidence type="ECO:0007744" key="18">
    <source>
    </source>
</evidence>
<evidence type="ECO:0007744" key="19">
    <source>
    </source>
</evidence>
<evidence type="ECO:0007744" key="20">
    <source>
    </source>
</evidence>
<evidence type="ECO:0007744" key="21">
    <source>
    </source>
</evidence>
<evidence type="ECO:0007744" key="22">
    <source>
    </source>
</evidence>
<evidence type="ECO:0007744" key="23">
    <source>
    </source>
</evidence>
<evidence type="ECO:0007744" key="24">
    <source>
    </source>
</evidence>
<evidence type="ECO:0007829" key="25">
    <source>
        <dbReference type="PDB" id="3CQC"/>
    </source>
</evidence>
<sequence>MDRSGFGEISSPVIREAEVTRTARKQSAQKRVLLQASQDENFGNTTPRNQVIPRTPSSFRQPFTPTSRSLLRQPDISCILGTGGKSPRLTQSSGFFGNLSMVTNLDDSNWAAAFSSQRSGLFTNTEPHSITEDVTISAVMLREDDPGEAASMSMFSDFLQSFLKHSSSTVFDLVEEYENICGSQVNILSKIVSRATPGLQKFSKTASMLWLLQQEMVTWRLLASLYRDRIQSALEEESVFAVTAVNASEKTVVEALFQRDSLVRQSQLVVDWLESIAKDEIGEFSDNIEFYAKSVYWENTLHTLKQRQLTSYVGSVRPLVTELDPDAPIRQKMPLDDLDREDEVRLLKYLFTLIRAGMTEEAQRLCKRCGQAWRAATLEGWKLYHDPNVNGGTELEPVEGNPYRRIWKISCWRMAEDELFNRYERAIYAALSGNLKQLLPVCDTWEDTVWAYFRVMVDSLVEQEIQTSVATLDETEELPREYLGANWTLEKVFEELQATDKKRVLEENQEHYHIVQKFLILGDIDGLMDEFSKWLSKSRNNLPGHLLRFMTHLILFFRTLGLQTKEEVSIEVLKTYIQLLIREKHTNLIAFYTCHLPQDLAVAQYALFLESVTEFEQRHHCLELAKEADLDVATITKTVVENIRKKDNGEFSHHDLAPALDTGTTEEDRLKIDVIDWLVFDPAQRAEALKQGNAIMRKFLASKKHEAAKEVFVKIPQDSIAEIYNQCEEQGMESPLPAEDDNAIREHLCIRAYLEAHETFNEWFKHMNSVPQKPALIPQPTFTEKVAHEHKEKKYEMDFGIWKGHLDALTADVKEKMYNVLLFVDGGWMVDVREDAKEDHERTHQMVLLRKLCLPMLCFLLHTILHSTGQYQECLQLADMVSSERHKLYLVFSKEELRKLLQKLRESSLMLLDQGLDPLGYEIQL</sequence>
<proteinExistence type="evidence at protein level"/>
<reference key="1">
    <citation type="submission" date="2000-08" db="EMBL/GenBank/DDBJ databases">
        <title>Sequential assembly of structural modules forming the vertebrate nuclear pore complex.</title>
        <authorList>
            <person name="Cordes V.C."/>
            <person name="Hunziker A."/>
            <person name="Mueller-Pillasch F."/>
        </authorList>
    </citation>
    <scope>NUCLEOTIDE SEQUENCE [MRNA] (ISOFORM 1)</scope>
    <source>
        <tissue>Pancreatic cancer</tissue>
    </source>
</reference>
<reference key="2">
    <citation type="journal article" date="2004" name="Nat. Genet.">
        <title>Complete sequencing and characterization of 21,243 full-length human cDNAs.</title>
        <authorList>
            <person name="Ota T."/>
            <person name="Suzuki Y."/>
            <person name="Nishikawa T."/>
            <person name="Otsuki T."/>
            <person name="Sugiyama T."/>
            <person name="Irie R."/>
            <person name="Wakamatsu A."/>
            <person name="Hayashi K."/>
            <person name="Sato H."/>
            <person name="Nagai K."/>
            <person name="Kimura K."/>
            <person name="Makita H."/>
            <person name="Sekine M."/>
            <person name="Obayashi M."/>
            <person name="Nishi T."/>
            <person name="Shibahara T."/>
            <person name="Tanaka T."/>
            <person name="Ishii S."/>
            <person name="Yamamoto J."/>
            <person name="Saito K."/>
            <person name="Kawai Y."/>
            <person name="Isono Y."/>
            <person name="Nakamura Y."/>
            <person name="Nagahari K."/>
            <person name="Murakami K."/>
            <person name="Yasuda T."/>
            <person name="Iwayanagi T."/>
            <person name="Wagatsuma M."/>
            <person name="Shiratori A."/>
            <person name="Sudo H."/>
            <person name="Hosoiri T."/>
            <person name="Kaku Y."/>
            <person name="Kodaira H."/>
            <person name="Kondo H."/>
            <person name="Sugawara M."/>
            <person name="Takahashi M."/>
            <person name="Kanda K."/>
            <person name="Yokoi T."/>
            <person name="Furuya T."/>
            <person name="Kikkawa E."/>
            <person name="Omura Y."/>
            <person name="Abe K."/>
            <person name="Kamihara K."/>
            <person name="Katsuta N."/>
            <person name="Sato K."/>
            <person name="Tanikawa M."/>
            <person name="Yamazaki M."/>
            <person name="Ninomiya K."/>
            <person name="Ishibashi T."/>
            <person name="Yamashita H."/>
            <person name="Murakawa K."/>
            <person name="Fujimori K."/>
            <person name="Tanai H."/>
            <person name="Kimata M."/>
            <person name="Watanabe M."/>
            <person name="Hiraoka S."/>
            <person name="Chiba Y."/>
            <person name="Ishida S."/>
            <person name="Ono Y."/>
            <person name="Takiguchi S."/>
            <person name="Watanabe S."/>
            <person name="Yosida M."/>
            <person name="Hotuta T."/>
            <person name="Kusano J."/>
            <person name="Kanehori K."/>
            <person name="Takahashi-Fujii A."/>
            <person name="Hara H."/>
            <person name="Tanase T.-O."/>
            <person name="Nomura Y."/>
            <person name="Togiya S."/>
            <person name="Komai F."/>
            <person name="Hara R."/>
            <person name="Takeuchi K."/>
            <person name="Arita M."/>
            <person name="Imose N."/>
            <person name="Musashino K."/>
            <person name="Yuuki H."/>
            <person name="Oshima A."/>
            <person name="Sasaki N."/>
            <person name="Aotsuka S."/>
            <person name="Yoshikawa Y."/>
            <person name="Matsunawa H."/>
            <person name="Ichihara T."/>
            <person name="Shiohata N."/>
            <person name="Sano S."/>
            <person name="Moriya S."/>
            <person name="Momiyama H."/>
            <person name="Satoh N."/>
            <person name="Takami S."/>
            <person name="Terashima Y."/>
            <person name="Suzuki O."/>
            <person name="Nakagawa S."/>
            <person name="Senoh A."/>
            <person name="Mizoguchi H."/>
            <person name="Goto Y."/>
            <person name="Shimizu F."/>
            <person name="Wakebe H."/>
            <person name="Hishigaki H."/>
            <person name="Watanabe T."/>
            <person name="Sugiyama A."/>
            <person name="Takemoto M."/>
            <person name="Kawakami B."/>
            <person name="Yamazaki M."/>
            <person name="Watanabe K."/>
            <person name="Kumagai A."/>
            <person name="Itakura S."/>
            <person name="Fukuzumi Y."/>
            <person name="Fujimori Y."/>
            <person name="Komiyama M."/>
            <person name="Tashiro H."/>
            <person name="Tanigami A."/>
            <person name="Fujiwara T."/>
            <person name="Ono T."/>
            <person name="Yamada K."/>
            <person name="Fujii Y."/>
            <person name="Ozaki K."/>
            <person name="Hirao M."/>
            <person name="Ohmori Y."/>
            <person name="Kawabata A."/>
            <person name="Hikiji T."/>
            <person name="Kobatake N."/>
            <person name="Inagaki H."/>
            <person name="Ikema Y."/>
            <person name="Okamoto S."/>
            <person name="Okitani R."/>
            <person name="Kawakami T."/>
            <person name="Noguchi S."/>
            <person name="Itoh T."/>
            <person name="Shigeta K."/>
            <person name="Senba T."/>
            <person name="Matsumura K."/>
            <person name="Nakajima Y."/>
            <person name="Mizuno T."/>
            <person name="Morinaga M."/>
            <person name="Sasaki M."/>
            <person name="Togashi T."/>
            <person name="Oyama M."/>
            <person name="Hata H."/>
            <person name="Watanabe M."/>
            <person name="Komatsu T."/>
            <person name="Mizushima-Sugano J."/>
            <person name="Satoh T."/>
            <person name="Shirai Y."/>
            <person name="Takahashi Y."/>
            <person name="Nakagawa K."/>
            <person name="Okumura K."/>
            <person name="Nagase T."/>
            <person name="Nomura N."/>
            <person name="Kikuchi H."/>
            <person name="Masuho Y."/>
            <person name="Yamashita R."/>
            <person name="Nakai K."/>
            <person name="Yada T."/>
            <person name="Nakamura Y."/>
            <person name="Ohara O."/>
            <person name="Isogai T."/>
            <person name="Sugano S."/>
        </authorList>
    </citation>
    <scope>NUCLEOTIDE SEQUENCE [LARGE SCALE MRNA] (ISOFORM 2)</scope>
    <source>
        <tissue>Testis</tissue>
    </source>
</reference>
<reference key="3">
    <citation type="journal article" date="2006" name="Nature">
        <title>The finished DNA sequence of human chromosome 12.</title>
        <authorList>
            <person name="Scherer S.E."/>
            <person name="Muzny D.M."/>
            <person name="Buhay C.J."/>
            <person name="Chen R."/>
            <person name="Cree A."/>
            <person name="Ding Y."/>
            <person name="Dugan-Rocha S."/>
            <person name="Gill R."/>
            <person name="Gunaratne P."/>
            <person name="Harris R.A."/>
            <person name="Hawes A.C."/>
            <person name="Hernandez J."/>
            <person name="Hodgson A.V."/>
            <person name="Hume J."/>
            <person name="Jackson A."/>
            <person name="Khan Z.M."/>
            <person name="Kovar-Smith C."/>
            <person name="Lewis L.R."/>
            <person name="Lozado R.J."/>
            <person name="Metzker M.L."/>
            <person name="Milosavljevic A."/>
            <person name="Miner G.R."/>
            <person name="Montgomery K.T."/>
            <person name="Morgan M.B."/>
            <person name="Nazareth L.V."/>
            <person name="Scott G."/>
            <person name="Sodergren E."/>
            <person name="Song X.-Z."/>
            <person name="Steffen D."/>
            <person name="Lovering R.C."/>
            <person name="Wheeler D.A."/>
            <person name="Worley K.C."/>
            <person name="Yuan Y."/>
            <person name="Zhang Z."/>
            <person name="Adams C.Q."/>
            <person name="Ansari-Lari M.A."/>
            <person name="Ayele M."/>
            <person name="Brown M.J."/>
            <person name="Chen G."/>
            <person name="Chen Z."/>
            <person name="Clerc-Blankenburg K.P."/>
            <person name="Davis C."/>
            <person name="Delgado O."/>
            <person name="Dinh H.H."/>
            <person name="Draper H."/>
            <person name="Gonzalez-Garay M.L."/>
            <person name="Havlak P."/>
            <person name="Jackson L.R."/>
            <person name="Jacob L.S."/>
            <person name="Kelly S.H."/>
            <person name="Li L."/>
            <person name="Li Z."/>
            <person name="Liu J."/>
            <person name="Liu W."/>
            <person name="Lu J."/>
            <person name="Maheshwari M."/>
            <person name="Nguyen B.-V."/>
            <person name="Okwuonu G.O."/>
            <person name="Pasternak S."/>
            <person name="Perez L.M."/>
            <person name="Plopper F.J.H."/>
            <person name="Santibanez J."/>
            <person name="Shen H."/>
            <person name="Tabor P.E."/>
            <person name="Verduzco D."/>
            <person name="Waldron L."/>
            <person name="Wang Q."/>
            <person name="Williams G.A."/>
            <person name="Zhang J."/>
            <person name="Zhou J."/>
            <person name="Allen C.C."/>
            <person name="Amin A.G."/>
            <person name="Anyalebechi V."/>
            <person name="Bailey M."/>
            <person name="Barbaria J.A."/>
            <person name="Bimage K.E."/>
            <person name="Bryant N.P."/>
            <person name="Burch P.E."/>
            <person name="Burkett C.E."/>
            <person name="Burrell K.L."/>
            <person name="Calderon E."/>
            <person name="Cardenas V."/>
            <person name="Carter K."/>
            <person name="Casias K."/>
            <person name="Cavazos I."/>
            <person name="Cavazos S.R."/>
            <person name="Ceasar H."/>
            <person name="Chacko J."/>
            <person name="Chan S.N."/>
            <person name="Chavez D."/>
            <person name="Christopoulos C."/>
            <person name="Chu J."/>
            <person name="Cockrell R."/>
            <person name="Cox C.D."/>
            <person name="Dang M."/>
            <person name="Dathorne S.R."/>
            <person name="David R."/>
            <person name="Davis C.M."/>
            <person name="Davy-Carroll L."/>
            <person name="Deshazo D.R."/>
            <person name="Donlin J.E."/>
            <person name="D'Souza L."/>
            <person name="Eaves K.A."/>
            <person name="Egan A."/>
            <person name="Emery-Cohen A.J."/>
            <person name="Escotto M."/>
            <person name="Flagg N."/>
            <person name="Forbes L.D."/>
            <person name="Gabisi A.M."/>
            <person name="Garza M."/>
            <person name="Hamilton C."/>
            <person name="Henderson N."/>
            <person name="Hernandez O."/>
            <person name="Hines S."/>
            <person name="Hogues M.E."/>
            <person name="Huang M."/>
            <person name="Idlebird D.G."/>
            <person name="Johnson R."/>
            <person name="Jolivet A."/>
            <person name="Jones S."/>
            <person name="Kagan R."/>
            <person name="King L.M."/>
            <person name="Leal B."/>
            <person name="Lebow H."/>
            <person name="Lee S."/>
            <person name="LeVan J.M."/>
            <person name="Lewis L.C."/>
            <person name="London P."/>
            <person name="Lorensuhewa L.M."/>
            <person name="Loulseged H."/>
            <person name="Lovett D.A."/>
            <person name="Lucier A."/>
            <person name="Lucier R.L."/>
            <person name="Ma J."/>
            <person name="Madu R.C."/>
            <person name="Mapua P."/>
            <person name="Martindale A.D."/>
            <person name="Martinez E."/>
            <person name="Massey E."/>
            <person name="Mawhiney S."/>
            <person name="Meador M.G."/>
            <person name="Mendez S."/>
            <person name="Mercado C."/>
            <person name="Mercado I.C."/>
            <person name="Merritt C.E."/>
            <person name="Miner Z.L."/>
            <person name="Minja E."/>
            <person name="Mitchell T."/>
            <person name="Mohabbat F."/>
            <person name="Mohabbat K."/>
            <person name="Montgomery B."/>
            <person name="Moore N."/>
            <person name="Morris S."/>
            <person name="Munidasa M."/>
            <person name="Ngo R.N."/>
            <person name="Nguyen N.B."/>
            <person name="Nickerson E."/>
            <person name="Nwaokelemeh O.O."/>
            <person name="Nwokenkwo S."/>
            <person name="Obregon M."/>
            <person name="Oguh M."/>
            <person name="Oragunye N."/>
            <person name="Oviedo R.J."/>
            <person name="Parish B.J."/>
            <person name="Parker D.N."/>
            <person name="Parrish J."/>
            <person name="Parks K.L."/>
            <person name="Paul H.A."/>
            <person name="Payton B.A."/>
            <person name="Perez A."/>
            <person name="Perrin W."/>
            <person name="Pickens A."/>
            <person name="Primus E.L."/>
            <person name="Pu L.-L."/>
            <person name="Puazo M."/>
            <person name="Quiles M.M."/>
            <person name="Quiroz J.B."/>
            <person name="Rabata D."/>
            <person name="Reeves K."/>
            <person name="Ruiz S.J."/>
            <person name="Shao H."/>
            <person name="Sisson I."/>
            <person name="Sonaike T."/>
            <person name="Sorelle R.P."/>
            <person name="Sutton A.E."/>
            <person name="Svatek A.F."/>
            <person name="Svetz L.A."/>
            <person name="Tamerisa K.S."/>
            <person name="Taylor T.R."/>
            <person name="Teague B."/>
            <person name="Thomas N."/>
            <person name="Thorn R.D."/>
            <person name="Trejos Z.Y."/>
            <person name="Trevino B.K."/>
            <person name="Ukegbu O.N."/>
            <person name="Urban J.B."/>
            <person name="Vasquez L.I."/>
            <person name="Vera V.A."/>
            <person name="Villasana D.M."/>
            <person name="Wang L."/>
            <person name="Ward-Moore S."/>
            <person name="Warren J.T."/>
            <person name="Wei X."/>
            <person name="White F."/>
            <person name="Williamson A.L."/>
            <person name="Wleczyk R."/>
            <person name="Wooden H.S."/>
            <person name="Wooden S.H."/>
            <person name="Yen J."/>
            <person name="Yoon L."/>
            <person name="Yoon V."/>
            <person name="Zorrilla S.E."/>
            <person name="Nelson D."/>
            <person name="Kucherlapati R."/>
            <person name="Weinstock G."/>
            <person name="Gibbs R.A."/>
        </authorList>
    </citation>
    <scope>NUCLEOTIDE SEQUENCE [LARGE SCALE GENOMIC DNA]</scope>
</reference>
<reference key="4">
    <citation type="journal article" date="2004" name="Genome Res.">
        <title>The status, quality, and expansion of the NIH full-length cDNA project: the Mammalian Gene Collection (MGC).</title>
        <authorList>
            <consortium name="The MGC Project Team"/>
        </authorList>
    </citation>
    <scope>NUCLEOTIDE SEQUENCE [LARGE SCALE MRNA] (ISOFORMS 1 AND 3)</scope>
    <source>
        <tissue>Uterus</tissue>
    </source>
</reference>
<reference key="5">
    <citation type="journal article" date="2001" name="J. Cell Biol.">
        <title>An evolutionarily conserved NPC subcomplex, which redistributes in part to kinetochores in mammalian cells.</title>
        <authorList>
            <person name="Belgareh N."/>
            <person name="Rabut G."/>
            <person name="Bai S.W."/>
            <person name="van Overbeek M."/>
            <person name="Beaudouin J."/>
            <person name="Daigle N."/>
            <person name="Zatsepina O.V."/>
            <person name="Pasteau F."/>
            <person name="Labas V."/>
            <person name="Fromont-Racine M."/>
            <person name="Ellenberg J."/>
            <person name="Doye V."/>
        </authorList>
    </citation>
    <scope>SUBUNIT</scope>
    <scope>SUBCELLULAR LOCATION</scope>
</reference>
<reference key="6">
    <citation type="journal article" date="2001" name="J. Cell Biol.">
        <title>Novel vertebrate nucleoporins Nup133 and Nup160 play a role in mRNA export.</title>
        <authorList>
            <person name="Vasu S."/>
            <person name="Shah S."/>
            <person name="Orjalo A."/>
            <person name="Park M."/>
            <person name="Fischer W.H."/>
            <person name="Forbes D.J."/>
        </authorList>
    </citation>
    <scope>SUBUNIT</scope>
</reference>
<reference key="7">
    <citation type="journal article" date="2003" name="Mol. Biol. Cell">
        <title>Direct interaction with nup153 mediates binding of Tpr to the periphery of the nuclear pore complex.</title>
        <authorList>
            <person name="Hase M.E."/>
            <person name="Cordes V.C."/>
        </authorList>
    </citation>
    <scope>LACK OF INTERACTION WITH TPR</scope>
    <scope>SUBCELLULAR LOCATION</scope>
</reference>
<reference key="8">
    <citation type="journal article" date="2003" name="Proc. Natl. Acad. Sci. U.S.A.">
        <title>Depletion of a single nucleoporin, Nup107, prevents the assembly of a subset of nucleoporins into the nuclear pore complex.</title>
        <authorList>
            <person name="Boehmer T."/>
            <person name="Enninga J."/>
            <person name="Dales S."/>
            <person name="Blobel G."/>
            <person name="Zhong H."/>
        </authorList>
    </citation>
    <scope>FUNCTION</scope>
</reference>
<reference key="9">
    <citation type="journal article" date="2004" name="Mol. Biol. Cell">
        <title>Nucleoporins as components of the nuclear pore complex core structure and Tpr as the architectural element of the nuclear basket.</title>
        <authorList>
            <person name="Krull S."/>
            <person name="Thyberg J."/>
            <person name="Bjorkroth B."/>
            <person name="Rackwitz H.R."/>
            <person name="Cordes V.C."/>
        </authorList>
    </citation>
    <scope>FUNCTION</scope>
    <scope>IDENTIFICATION IN THE NUCLEAR PORE COMPLEX</scope>
    <scope>SUBCELLULAR LOCATION</scope>
</reference>
<reference key="10">
    <citation type="journal article" date="2006" name="Cell">
        <title>Global, in vivo, and site-specific phosphorylation dynamics in signaling networks.</title>
        <authorList>
            <person name="Olsen J.V."/>
            <person name="Blagoev B."/>
            <person name="Gnad F."/>
            <person name="Macek B."/>
            <person name="Kumar C."/>
            <person name="Mortensen P."/>
            <person name="Mann M."/>
        </authorList>
    </citation>
    <scope>PHOSPHORYLATION [LARGE SCALE ANALYSIS] AT SER-86</scope>
    <scope>IDENTIFICATION BY MASS SPECTROMETRY [LARGE SCALE ANALYSIS]</scope>
    <source>
        <tissue>Cervix carcinoma</tissue>
    </source>
</reference>
<reference key="11">
    <citation type="journal article" date="2006" name="Nat. Biotechnol.">
        <title>A probability-based approach for high-throughput protein phosphorylation analysis and site localization.</title>
        <authorList>
            <person name="Beausoleil S.A."/>
            <person name="Villen J."/>
            <person name="Gerber S.A."/>
            <person name="Rush J."/>
            <person name="Gygi S.P."/>
        </authorList>
    </citation>
    <scope>PHOSPHORYLATION [LARGE SCALE ANALYSIS] AT THR-46</scope>
    <scope>IDENTIFICATION BY MASS SPECTROMETRY [LARGE SCALE ANALYSIS]</scope>
    <source>
        <tissue>Cervix carcinoma</tissue>
    </source>
</reference>
<reference key="12">
    <citation type="journal article" date="2007" name="Science">
        <title>ATM and ATR substrate analysis reveals extensive protein networks responsive to DNA damage.</title>
        <authorList>
            <person name="Matsuoka S."/>
            <person name="Ballif B.A."/>
            <person name="Smogorzewska A."/>
            <person name="McDonald E.R. III"/>
            <person name="Hurov K.E."/>
            <person name="Luo J."/>
            <person name="Bakalarski C.E."/>
            <person name="Zhao Z."/>
            <person name="Solimini N."/>
            <person name="Lerenthal Y."/>
            <person name="Shiloh Y."/>
            <person name="Gygi S.P."/>
            <person name="Elledge S.J."/>
        </authorList>
    </citation>
    <scope>PHOSPHORYLATION [LARGE SCALE ANALYSIS] AT SER-37</scope>
    <scope>IDENTIFICATION BY MASS SPECTROMETRY [LARGE SCALE ANALYSIS]</scope>
    <source>
        <tissue>Embryonic kidney</tissue>
    </source>
</reference>
<reference key="13">
    <citation type="journal article" date="2008" name="Mol. Cell">
        <title>Kinase-selective enrichment enables quantitative phosphoproteomics of the kinome across the cell cycle.</title>
        <authorList>
            <person name="Daub H."/>
            <person name="Olsen J.V."/>
            <person name="Bairlein M."/>
            <person name="Gnad F."/>
            <person name="Oppermann F.S."/>
            <person name="Korner R."/>
            <person name="Greff Z."/>
            <person name="Keri G."/>
            <person name="Stemmann O."/>
            <person name="Mann M."/>
        </authorList>
    </citation>
    <scope>IDENTIFICATION BY MASS SPECTROMETRY [LARGE SCALE ANALYSIS]</scope>
    <source>
        <tissue>Cervix carcinoma</tissue>
    </source>
</reference>
<reference key="14">
    <citation type="journal article" date="2008" name="Proc. Natl. Acad. Sci. U.S.A.">
        <title>A quantitative atlas of mitotic phosphorylation.</title>
        <authorList>
            <person name="Dephoure N."/>
            <person name="Zhou C."/>
            <person name="Villen J."/>
            <person name="Beausoleil S.A."/>
            <person name="Bakalarski C.E."/>
            <person name="Elledge S.J."/>
            <person name="Gygi S.P."/>
        </authorList>
    </citation>
    <scope>PHOSPHORYLATION [LARGE SCALE ANALYSIS] AT SER-4; SER-11; SER-37; THR-46; THR-55; SER-58; THR-64; SER-69 AND SER-86</scope>
    <scope>IDENTIFICATION BY MASS SPECTROMETRY [LARGE SCALE ANALYSIS]</scope>
    <source>
        <tissue>Cervix carcinoma</tissue>
    </source>
</reference>
<reference key="15">
    <citation type="journal article" date="2009" name="Sci. Signal.">
        <title>Quantitative phosphoproteomic analysis of T cell receptor signaling reveals system-wide modulation of protein-protein interactions.</title>
        <authorList>
            <person name="Mayya V."/>
            <person name="Lundgren D.H."/>
            <person name="Hwang S.-I."/>
            <person name="Rezaul K."/>
            <person name="Wu L."/>
            <person name="Eng J.K."/>
            <person name="Rodionov V."/>
            <person name="Han D.K."/>
        </authorList>
    </citation>
    <scope>PHOSPHORYLATION [LARGE SCALE ANALYSIS] AT SER-37 AND THR-46</scope>
    <scope>IDENTIFICATION BY MASS SPECTROMETRY [LARGE SCALE ANALYSIS]</scope>
    <source>
        <tissue>Leukemic T-cell</tissue>
    </source>
</reference>
<reference key="16">
    <citation type="journal article" date="2010" name="Sci. Signal.">
        <title>Quantitative phosphoproteomics reveals widespread full phosphorylation site occupancy during mitosis.</title>
        <authorList>
            <person name="Olsen J.V."/>
            <person name="Vermeulen M."/>
            <person name="Santamaria A."/>
            <person name="Kumar C."/>
            <person name="Miller M.L."/>
            <person name="Jensen L.J."/>
            <person name="Gnad F."/>
            <person name="Cox J."/>
            <person name="Jensen T.S."/>
            <person name="Nigg E.A."/>
            <person name="Brunak S."/>
            <person name="Mann M."/>
        </authorList>
    </citation>
    <scope>ACETYLATION [LARGE SCALE ANALYSIS] AT MET-1</scope>
    <scope>PHOSPHORYLATION [LARGE SCALE ANALYSIS] AT SER-4; SER-11 AND THR-46</scope>
    <scope>IDENTIFICATION BY MASS SPECTROMETRY [LARGE SCALE ANALYSIS]</scope>
    <source>
        <tissue>Cervix carcinoma</tissue>
    </source>
</reference>
<reference key="17">
    <citation type="journal article" date="2011" name="BMC Syst. Biol.">
        <title>Initial characterization of the human central proteome.</title>
        <authorList>
            <person name="Burkard T.R."/>
            <person name="Planyavsky M."/>
            <person name="Kaupe I."/>
            <person name="Breitwieser F.P."/>
            <person name="Buerckstuemmer T."/>
            <person name="Bennett K.L."/>
            <person name="Superti-Furga G."/>
            <person name="Colinge J."/>
        </authorList>
    </citation>
    <scope>IDENTIFICATION BY MASS SPECTROMETRY [LARGE SCALE ANALYSIS]</scope>
</reference>
<reference key="18">
    <citation type="journal article" date="2013" name="J. Proteome Res.">
        <title>Toward a comprehensive characterization of a human cancer cell phosphoproteome.</title>
        <authorList>
            <person name="Zhou H."/>
            <person name="Di Palma S."/>
            <person name="Preisinger C."/>
            <person name="Peng M."/>
            <person name="Polat A.N."/>
            <person name="Heck A.J."/>
            <person name="Mohammed S."/>
        </authorList>
    </citation>
    <scope>PHOSPHORYLATION [LARGE SCALE ANALYSIS] AT SER-4; SER-10; SER-11; SER-37; SER-57; SER-58; THR-64 AND SER-86</scope>
    <scope>IDENTIFICATION BY MASS SPECTROMETRY [LARGE SCALE ANALYSIS]</scope>
    <source>
        <tissue>Cervix carcinoma</tissue>
        <tissue>Erythroleukemia</tissue>
    </source>
</reference>
<reference key="19">
    <citation type="journal article" date="2014" name="J. Proteomics">
        <title>An enzyme assisted RP-RPLC approach for in-depth analysis of human liver phosphoproteome.</title>
        <authorList>
            <person name="Bian Y."/>
            <person name="Song C."/>
            <person name="Cheng K."/>
            <person name="Dong M."/>
            <person name="Wang F."/>
            <person name="Huang J."/>
            <person name="Sun D."/>
            <person name="Wang L."/>
            <person name="Ye M."/>
            <person name="Zou H."/>
        </authorList>
    </citation>
    <scope>IDENTIFICATION BY MASS SPECTROMETRY [LARGE SCALE ANALYSIS]</scope>
    <source>
        <tissue>Liver</tissue>
    </source>
</reference>
<reference key="20">
    <citation type="journal article" date="2014" name="Mol. Cell. Proteomics">
        <title>Immunoaffinity enrichment and mass spectrometry analysis of protein methylation.</title>
        <authorList>
            <person name="Guo A."/>
            <person name="Gu H."/>
            <person name="Zhou J."/>
            <person name="Mulhern D."/>
            <person name="Wang Y."/>
            <person name="Lee K.A."/>
            <person name="Yang V."/>
            <person name="Aguiar M."/>
            <person name="Kornhauser J."/>
            <person name="Jia X."/>
            <person name="Ren J."/>
            <person name="Beausoleil S.A."/>
            <person name="Silva J.C."/>
            <person name="Vemulapalli V."/>
            <person name="Bedford M.T."/>
            <person name="Comb M.J."/>
        </authorList>
    </citation>
    <scope>METHYLATION [LARGE SCALE ANALYSIS] AT ARG-60</scope>
    <scope>IDENTIFICATION BY MASS SPECTROMETRY [LARGE SCALE ANALYSIS]</scope>
    <source>
        <tissue>Colon carcinoma</tissue>
    </source>
</reference>
<reference key="21">
    <citation type="journal article" date="2015" name="Am. J. Hum. Genet.">
        <title>Biallelic mutations in nuclear pore complex subunit NUP107 cause early-childhood-onset steroid-resistant nephrotic syndrome.</title>
        <authorList>
            <person name="Miyake N."/>
            <person name="Tsukaguchi H."/>
            <person name="Koshimizu E."/>
            <person name="Shono A."/>
            <person name="Matsunaga S."/>
            <person name="Shiina M."/>
            <person name="Mimura Y."/>
            <person name="Imamura S."/>
            <person name="Hirose T."/>
            <person name="Okudela K."/>
            <person name="Nozu K."/>
            <person name="Akioka Y."/>
            <person name="Hattori M."/>
            <person name="Yoshikawa N."/>
            <person name="Kitamura A."/>
            <person name="Cheong H.I."/>
            <person name="Kagami S."/>
            <person name="Yamashita M."/>
            <person name="Fujita A."/>
            <person name="Miyatake S."/>
            <person name="Tsurusaki Y."/>
            <person name="Nakashima M."/>
            <person name="Saitsu H."/>
            <person name="Ohashi K."/>
            <person name="Imamoto N."/>
            <person name="Ryo A."/>
            <person name="Ogata K."/>
            <person name="Iijima K."/>
            <person name="Matsumoto N."/>
        </authorList>
    </citation>
    <scope>INVOLVEMENT IN NPHS11</scope>
    <scope>VARIANTS NPHS11 TYR-157 AND ALA-831</scope>
    <scope>CHARACTERIZATION OF VARIANTS NPHS11 TYR-157 AND ALA-831</scope>
    <scope>INTERACTION WITH NUP133</scope>
    <scope>SUBCELLULAR LOCATION</scope>
    <scope>TISSUE SPECIFICITY</scope>
</reference>
<reference key="22">
    <citation type="journal article" date="2015" name="J. Clin. Invest.">
        <title>A mutation in the nucleoporin-107 gene causes XX gonadal dysgenesis.</title>
        <authorList>
            <person name="Weinberg-Shukron A."/>
            <person name="Renbaum P."/>
            <person name="Kalifa R."/>
            <person name="Zeligson S."/>
            <person name="Ben-Neriah Z."/>
            <person name="Dreifuss A."/>
            <person name="Abu-Rayyan A."/>
            <person name="Maatuk N."/>
            <person name="Fardian N."/>
            <person name="Rekler D."/>
            <person name="Kanaan M."/>
            <person name="Samson A.O."/>
            <person name="Levy-Lahad E."/>
            <person name="Gerlitz O."/>
            <person name="Zangen D."/>
        </authorList>
    </citation>
    <scope>INVOLVEMENT IN ODG6</scope>
    <scope>VARIANT ODG6 ASN-447</scope>
</reference>
<reference key="23">
    <citation type="journal article" date="2017" name="J. Med. Genet.">
        <title>Homozygous mutation in NUP107 leads to microcephaly with steroid-resistant nephrotic condition similar to Galloway-Mowat syndrome.</title>
        <authorList>
            <person name="Rosti R.O."/>
            <person name="Sotak B.N."/>
            <person name="Bielas S.L."/>
            <person name="Bhat G."/>
            <person name="Silhavy J.L."/>
            <person name="Aslanger A.D."/>
            <person name="Altunoglu U."/>
            <person name="Bilge I."/>
            <person name="Tasdemir M."/>
            <person name="Yzaguirrem A.D."/>
            <person name="Musaev D."/>
            <person name="Infante S."/>
            <person name="Thuong W."/>
            <person name="Marin-Valencia I."/>
            <person name="Nelson S.F."/>
            <person name="Kayserili H."/>
            <person name="Gleeson J.G."/>
        </authorList>
    </citation>
    <scope>INVOLVEMENT IN GAMOS7</scope>
    <scope>VARIANT GAMOS7 ILE-101</scope>
    <scope>CHARACTERIZATION OF VARIANT GAMOS7 ILE-101</scope>
</reference>
<reference key="24">
    <citation type="journal article" date="2017" name="Kidney Int.">
        <title>Genomic and clinical profiling of a national nephrotic syndrome cohort advocates a precision medicine approach to disease management.</title>
        <authorList>
            <person name="Bierzynska A."/>
            <person name="McCarthy H.J."/>
            <person name="Soderquest K."/>
            <person name="Sen E.S."/>
            <person name="Colby E."/>
            <person name="Ding W.Y."/>
            <person name="Nabhan M.M."/>
            <person name="Kerecuk L."/>
            <person name="Hegde S."/>
            <person name="Hughes D."/>
            <person name="Marks S."/>
            <person name="Feather S."/>
            <person name="Jones C."/>
            <person name="Webb N.J."/>
            <person name="Ognjanovic M."/>
            <person name="Christian M."/>
            <person name="Gilbert R.D."/>
            <person name="Sinha M.D."/>
            <person name="Lord G.M."/>
            <person name="Simpson M."/>
            <person name="Koziell A.B."/>
            <person name="Welsh G.I."/>
            <person name="Saleem M.A."/>
        </authorList>
    </citation>
    <scope>INVOLVEMENT IN GAMOS7</scope>
    <scope>VARIANTS GAMOS7 ILE-101 AND TYR-442</scope>
</reference>
<reference key="25">
    <citation type="journal article" date="2018" name="J. Clin. Invest.">
        <title>Mutations in multiple components of the nuclear pore complex cause nephrotic syndrome.</title>
        <authorList>
            <person name="Braun D.A."/>
            <person name="Lovric S."/>
            <person name="Schapiro D."/>
            <person name="Schneider R."/>
            <person name="Marquez J."/>
            <person name="Asif M."/>
            <person name="Hussain M.S."/>
            <person name="Daga A."/>
            <person name="Widmeier E."/>
            <person name="Rao J."/>
            <person name="Ashraf S."/>
            <person name="Tan W."/>
            <person name="Lusk C.P."/>
            <person name="Kolb A."/>
            <person name="Jobst-Schwan T."/>
            <person name="Schmidt J.M."/>
            <person name="Hoogstraten C.A."/>
            <person name="Eddy K."/>
            <person name="Kitzler T.M."/>
            <person name="Shril S."/>
            <person name="Moawia A."/>
            <person name="Schrage K."/>
            <person name="Khayyat A.I.A."/>
            <person name="Lawson J.A."/>
            <person name="Gee H.Y."/>
            <person name="Warejko J.K."/>
            <person name="Hermle T."/>
            <person name="Majmundar A.J."/>
            <person name="Hugo H."/>
            <person name="Budde B."/>
            <person name="Motameny S."/>
            <person name="Altmueller J."/>
            <person name="Noegel A.A."/>
            <person name="Fathy H.M."/>
            <person name="Gale D.P."/>
            <person name="Waseem S.S."/>
            <person name="Khan A."/>
            <person name="Kerecuk L."/>
            <person name="Hashmi S."/>
            <person name="Mohebbi N."/>
            <person name="Ettenger R."/>
            <person name="Serdaroglu E."/>
            <person name="Alhasan K.A."/>
            <person name="Hashem M."/>
            <person name="Goncalves S."/>
            <person name="Ariceta G."/>
            <person name="Ubetagoyena M."/>
            <person name="Antonin W."/>
            <person name="Baig S.M."/>
            <person name="Alkuraya F.S."/>
            <person name="Shen Q."/>
            <person name="Xu H."/>
            <person name="Antignac C."/>
            <person name="Lifton R.P."/>
            <person name="Mane S."/>
            <person name="Nuernberg P."/>
            <person name="Khokha M.K."/>
            <person name="Hildebrandt F."/>
        </authorList>
    </citation>
    <scope>FUNCTION</scope>
    <scope>INTERACTION WITH NUP133</scope>
    <scope>INVOLVEMENT IN GAMOS7</scope>
    <scope>INVOLVEMENT IN NPHS11</scope>
    <scope>VARIANT GAMOS7 ILE-101</scope>
    <scope>VARIANTS NPHS11 GLU-710 DEL AND CYS-889</scope>
    <scope>CHARACTERIZATION OF VARIANT GAMOS7 ILE-101</scope>
    <scope>CHARACTERIZATION OF VARIANT NPHS11 CYS-889</scope>
</reference>
<reference key="26">
    <citation type="journal article" date="2022" name="Eur. J. Hum. Genet.">
        <title>Meiotic genes in premature ovarian insufficiency: variants in HROB and REC8 as likely genetic causes.</title>
        <authorList>
            <person name="Tucker E.J."/>
            <person name="Bell K.M."/>
            <person name="Robevska G."/>
            <person name="van den Bergen J."/>
            <person name="Ayers K.L."/>
            <person name="Listyasari N."/>
            <person name="Faradz S.M."/>
            <person name="Dulon J."/>
            <person name="Bakhshalizadeh S."/>
            <person name="Sreenivasan R."/>
            <person name="Nouyou B."/>
            <person name="Carre W."/>
            <person name="Akloul L."/>
            <person name="Duros S."/>
            <person name="Domin-Bernhard M."/>
            <person name="Belaud-Rotureau M.A."/>
            <person name="Touraine P."/>
            <person name="Jaillard S."/>
            <person name="Sinclair A.H."/>
        </authorList>
    </citation>
    <scope>VARIANT ODG6 HIS-355</scope>
    <scope>INVOLVEMENT IN ODG6</scope>
</reference>
<dbReference type="EMBL" id="AJ295745">
    <property type="protein sequence ID" value="CAC03716.1"/>
    <property type="molecule type" value="mRNA"/>
</dbReference>
<dbReference type="EMBL" id="AK302773">
    <property type="protein sequence ID" value="BAG63979.1"/>
    <property type="molecule type" value="mRNA"/>
</dbReference>
<dbReference type="EMBL" id="AC090061">
    <property type="status" value="NOT_ANNOTATED_CDS"/>
    <property type="molecule type" value="Genomic_DNA"/>
</dbReference>
<dbReference type="EMBL" id="AC124890">
    <property type="status" value="NOT_ANNOTATED_CDS"/>
    <property type="molecule type" value="Genomic_DNA"/>
</dbReference>
<dbReference type="EMBL" id="BC017167">
    <property type="protein sequence ID" value="AAH17167.1"/>
    <property type="molecule type" value="mRNA"/>
</dbReference>
<dbReference type="EMBL" id="BC043343">
    <property type="protein sequence ID" value="AAH43343.1"/>
    <property type="molecule type" value="mRNA"/>
</dbReference>
<dbReference type="CCDS" id="CCDS81712.1">
    <molecule id="P57740-2"/>
</dbReference>
<dbReference type="CCDS" id="CCDS8985.1">
    <molecule id="P57740-1"/>
</dbReference>
<dbReference type="RefSeq" id="NP_001317121.1">
    <molecule id="P57740-2"/>
    <property type="nucleotide sequence ID" value="NM_001330192.2"/>
</dbReference>
<dbReference type="RefSeq" id="NP_065134.1">
    <molecule id="P57740-1"/>
    <property type="nucleotide sequence ID" value="NM_020401.4"/>
</dbReference>
<dbReference type="PDB" id="3CQC">
    <property type="method" value="X-ray"/>
    <property type="resolution" value="2.53 A"/>
    <property type="chains" value="A=658-925"/>
</dbReference>
<dbReference type="PDB" id="3CQG">
    <property type="method" value="X-ray"/>
    <property type="resolution" value="3.00 A"/>
    <property type="chains" value="A=658-771, A=802-925"/>
</dbReference>
<dbReference type="PDB" id="3I4R">
    <property type="method" value="X-ray"/>
    <property type="resolution" value="3.53 A"/>
    <property type="chains" value="A=658-925"/>
</dbReference>
<dbReference type="PDB" id="5A9Q">
    <property type="method" value="EM"/>
    <property type="resolution" value="23.00 A"/>
    <property type="chains" value="4/D/M/V=1-925"/>
</dbReference>
<dbReference type="PDB" id="7PEQ">
    <property type="method" value="EM"/>
    <property type="resolution" value="35.00 A"/>
    <property type="chains" value="AD/BD/CD/DD=1-925"/>
</dbReference>
<dbReference type="PDB" id="7R5J">
    <property type="method" value="EM"/>
    <property type="resolution" value="50.00 A"/>
    <property type="chains" value="L0/L1/L2/L3=1-925"/>
</dbReference>
<dbReference type="PDB" id="7R5K">
    <property type="method" value="EM"/>
    <property type="resolution" value="12.00 A"/>
    <property type="chains" value="L0/L1/L2/L3=1-925"/>
</dbReference>
<dbReference type="PDBsum" id="3CQC"/>
<dbReference type="PDBsum" id="3CQG"/>
<dbReference type="PDBsum" id="3I4R"/>
<dbReference type="PDBsum" id="5A9Q"/>
<dbReference type="PDBsum" id="7PEQ"/>
<dbReference type="PDBsum" id="7R5J"/>
<dbReference type="PDBsum" id="7R5K"/>
<dbReference type="EMDB" id="EMD-14321"/>
<dbReference type="EMDB" id="EMD-14322"/>
<dbReference type="SMR" id="P57740"/>
<dbReference type="BioGRID" id="121386">
    <property type="interactions" value="238"/>
</dbReference>
<dbReference type="ComplexPortal" id="CPX-873">
    <property type="entry name" value="Nuclear pore complex"/>
</dbReference>
<dbReference type="CORUM" id="P57740"/>
<dbReference type="FunCoup" id="P57740">
    <property type="interactions" value="3406"/>
</dbReference>
<dbReference type="IntAct" id="P57740">
    <property type="interactions" value="129"/>
</dbReference>
<dbReference type="MINT" id="P57740"/>
<dbReference type="STRING" id="9606.ENSP00000229179"/>
<dbReference type="TCDB" id="1.I.1.1.3">
    <property type="family name" value="the nuclear pore complex (npc) family"/>
</dbReference>
<dbReference type="GlyCosmos" id="P57740">
    <property type="glycosylation" value="1 site, 1 glycan"/>
</dbReference>
<dbReference type="GlyGen" id="P57740">
    <property type="glycosylation" value="9 sites, 1 N-linked glycan (1 site), 1 O-linked glycan (7 sites)"/>
</dbReference>
<dbReference type="iPTMnet" id="P57740"/>
<dbReference type="MetOSite" id="P57740"/>
<dbReference type="PhosphoSitePlus" id="P57740"/>
<dbReference type="SwissPalm" id="P57740"/>
<dbReference type="BioMuta" id="NUP107"/>
<dbReference type="DMDM" id="12230339"/>
<dbReference type="CPTAC" id="CPTAC-986"/>
<dbReference type="jPOST" id="P57740"/>
<dbReference type="MassIVE" id="P57740"/>
<dbReference type="PaxDb" id="9606-ENSP00000229179"/>
<dbReference type="PeptideAtlas" id="P57740"/>
<dbReference type="ProteomicsDB" id="5575"/>
<dbReference type="ProteomicsDB" id="57028">
    <molecule id="P57740-1"/>
</dbReference>
<dbReference type="ProteomicsDB" id="67197"/>
<dbReference type="Pumba" id="P57740"/>
<dbReference type="Antibodypedia" id="16892">
    <property type="antibodies" value="238 antibodies from 35 providers"/>
</dbReference>
<dbReference type="DNASU" id="57122"/>
<dbReference type="Ensembl" id="ENST00000229179.9">
    <molecule id="P57740-1"/>
    <property type="protein sequence ID" value="ENSP00000229179.4"/>
    <property type="gene ID" value="ENSG00000111581.10"/>
</dbReference>
<dbReference type="Ensembl" id="ENST00000378905.6">
    <molecule id="P57740-3"/>
    <property type="protein sequence ID" value="ENSP00000368185.2"/>
    <property type="gene ID" value="ENSG00000111581.10"/>
</dbReference>
<dbReference type="Ensembl" id="ENST00000539906.5">
    <molecule id="P57740-2"/>
    <property type="protein sequence ID" value="ENSP00000441448.1"/>
    <property type="gene ID" value="ENSG00000111581.10"/>
</dbReference>
<dbReference type="GeneID" id="57122"/>
<dbReference type="KEGG" id="hsa:57122"/>
<dbReference type="MANE-Select" id="ENST00000229179.9">
    <property type="protein sequence ID" value="ENSP00000229179.4"/>
    <property type="RefSeq nucleotide sequence ID" value="NM_020401.4"/>
    <property type="RefSeq protein sequence ID" value="NP_065134.1"/>
</dbReference>
<dbReference type="UCSC" id="uc001suf.4">
    <molecule id="P57740-1"/>
    <property type="organism name" value="human"/>
</dbReference>
<dbReference type="AGR" id="HGNC:29914"/>
<dbReference type="CTD" id="57122"/>
<dbReference type="DisGeNET" id="57122"/>
<dbReference type="GeneCards" id="NUP107"/>
<dbReference type="HGNC" id="HGNC:29914">
    <property type="gene designation" value="NUP107"/>
</dbReference>
<dbReference type="HPA" id="ENSG00000111581">
    <property type="expression patterns" value="Low tissue specificity"/>
</dbReference>
<dbReference type="MalaCards" id="NUP107"/>
<dbReference type="MIM" id="607617">
    <property type="type" value="gene"/>
</dbReference>
<dbReference type="MIM" id="616730">
    <property type="type" value="phenotype"/>
</dbReference>
<dbReference type="MIM" id="618078">
    <property type="type" value="phenotype"/>
</dbReference>
<dbReference type="MIM" id="618348">
    <property type="type" value="phenotype"/>
</dbReference>
<dbReference type="neXtProt" id="NX_P57740"/>
<dbReference type="OpenTargets" id="ENSG00000111581"/>
<dbReference type="Orphanet" id="243">
    <property type="disease" value="46,XX gonadal dysgenesis"/>
</dbReference>
<dbReference type="Orphanet" id="2065">
    <property type="disease" value="Galloway-Mowat syndrome"/>
</dbReference>
<dbReference type="Orphanet" id="656">
    <property type="disease" value="Hereditary steroid-resistant nephrotic syndrome"/>
</dbReference>
<dbReference type="PharmGKB" id="PA134890486"/>
<dbReference type="VEuPathDB" id="HostDB:ENSG00000111581"/>
<dbReference type="eggNOG" id="KOG1964">
    <property type="taxonomic scope" value="Eukaryota"/>
</dbReference>
<dbReference type="GeneTree" id="ENSGT00390000012080"/>
<dbReference type="HOGENOM" id="CLU_012944_1_0_1"/>
<dbReference type="InParanoid" id="P57740"/>
<dbReference type="OMA" id="MAHIVLF"/>
<dbReference type="OrthoDB" id="3098at2759"/>
<dbReference type="PAN-GO" id="P57740">
    <property type="GO annotations" value="6 GO annotations based on evolutionary models"/>
</dbReference>
<dbReference type="PhylomeDB" id="P57740"/>
<dbReference type="TreeFam" id="TF324259"/>
<dbReference type="PathwayCommons" id="P57740"/>
<dbReference type="Reactome" id="R-HSA-1169408">
    <property type="pathway name" value="ISG15 antiviral mechanism"/>
</dbReference>
<dbReference type="Reactome" id="R-HSA-141444">
    <property type="pathway name" value="Amplification of signal from unattached kinetochores via a MAD2 inhibitory signal"/>
</dbReference>
<dbReference type="Reactome" id="R-HSA-159227">
    <property type="pathway name" value="Transport of the SLBP independent Mature mRNA"/>
</dbReference>
<dbReference type="Reactome" id="R-HSA-159230">
    <property type="pathway name" value="Transport of the SLBP Dependant Mature mRNA"/>
</dbReference>
<dbReference type="Reactome" id="R-HSA-159231">
    <property type="pathway name" value="Transport of Mature mRNA Derived from an Intronless Transcript"/>
</dbReference>
<dbReference type="Reactome" id="R-HSA-159236">
    <property type="pathway name" value="Transport of Mature mRNA derived from an Intron-Containing Transcript"/>
</dbReference>
<dbReference type="Reactome" id="R-HSA-165054">
    <property type="pathway name" value="Rev-mediated nuclear export of HIV RNA"/>
</dbReference>
<dbReference type="Reactome" id="R-HSA-168271">
    <property type="pathway name" value="Transport of Ribonucleoproteins into the Host Nucleus"/>
</dbReference>
<dbReference type="Reactome" id="R-HSA-168276">
    <property type="pathway name" value="NS1 Mediated Effects on Host Pathways"/>
</dbReference>
<dbReference type="Reactome" id="R-HSA-168325">
    <property type="pathway name" value="Viral Messenger RNA Synthesis"/>
</dbReference>
<dbReference type="Reactome" id="R-HSA-168333">
    <property type="pathway name" value="NEP/NS2 Interacts with the Cellular Export Machinery"/>
</dbReference>
<dbReference type="Reactome" id="R-HSA-170822">
    <property type="pathway name" value="Regulation of Glucokinase by Glucokinase Regulatory Protein"/>
</dbReference>
<dbReference type="Reactome" id="R-HSA-180746">
    <property type="pathway name" value="Nuclear import of Rev protein"/>
</dbReference>
<dbReference type="Reactome" id="R-HSA-180910">
    <property type="pathway name" value="Vpr-mediated nuclear import of PICs"/>
</dbReference>
<dbReference type="Reactome" id="R-HSA-191859">
    <property type="pathway name" value="snRNP Assembly"/>
</dbReference>
<dbReference type="Reactome" id="R-HSA-2467813">
    <property type="pathway name" value="Separation of Sister Chromatids"/>
</dbReference>
<dbReference type="Reactome" id="R-HSA-2500257">
    <property type="pathway name" value="Resolution of Sister Chromatid Cohesion"/>
</dbReference>
<dbReference type="Reactome" id="R-HSA-3108214">
    <property type="pathway name" value="SUMOylation of DNA damage response and repair proteins"/>
</dbReference>
<dbReference type="Reactome" id="R-HSA-3232142">
    <property type="pathway name" value="SUMOylation of ubiquitinylation proteins"/>
</dbReference>
<dbReference type="Reactome" id="R-HSA-3301854">
    <property type="pathway name" value="Nuclear Pore Complex (NPC) Disassembly"/>
</dbReference>
<dbReference type="Reactome" id="R-HSA-3371453">
    <property type="pathway name" value="Regulation of HSF1-mediated heat shock response"/>
</dbReference>
<dbReference type="Reactome" id="R-HSA-4085377">
    <property type="pathway name" value="SUMOylation of SUMOylation proteins"/>
</dbReference>
<dbReference type="Reactome" id="R-HSA-4551638">
    <property type="pathway name" value="SUMOylation of chromatin organization proteins"/>
</dbReference>
<dbReference type="Reactome" id="R-HSA-4570464">
    <property type="pathway name" value="SUMOylation of RNA binding proteins"/>
</dbReference>
<dbReference type="Reactome" id="R-HSA-4615885">
    <property type="pathway name" value="SUMOylation of DNA replication proteins"/>
</dbReference>
<dbReference type="Reactome" id="R-HSA-5578749">
    <property type="pathway name" value="Transcriptional regulation by small RNAs"/>
</dbReference>
<dbReference type="Reactome" id="R-HSA-5619107">
    <property type="pathway name" value="Defective TPR may confer susceptibility towards thyroid papillary carcinoma (TPC)"/>
</dbReference>
<dbReference type="Reactome" id="R-HSA-5663220">
    <property type="pathway name" value="RHO GTPases Activate Formins"/>
</dbReference>
<dbReference type="Reactome" id="R-HSA-6784531">
    <property type="pathway name" value="tRNA processing in the nucleus"/>
</dbReference>
<dbReference type="Reactome" id="R-HSA-68877">
    <property type="pathway name" value="Mitotic Prometaphase"/>
</dbReference>
<dbReference type="Reactome" id="R-HSA-9609690">
    <property type="pathway name" value="HCMV Early Events"/>
</dbReference>
<dbReference type="Reactome" id="R-HSA-9610379">
    <property type="pathway name" value="HCMV Late Events"/>
</dbReference>
<dbReference type="Reactome" id="R-HSA-9615933">
    <property type="pathway name" value="Postmitotic nuclear pore complex (NPC) reformation"/>
</dbReference>
<dbReference type="Reactome" id="R-HSA-9648025">
    <property type="pathway name" value="EML4 and NUDC in mitotic spindle formation"/>
</dbReference>
<dbReference type="Reactome" id="R-HSA-9705671">
    <property type="pathway name" value="SARS-CoV-2 activates/modulates innate and adaptive immune responses"/>
</dbReference>
<dbReference type="SignaLink" id="P57740"/>
<dbReference type="SIGNOR" id="P57740"/>
<dbReference type="BioGRID-ORCS" id="57122">
    <property type="hits" value="574 hits in 1167 CRISPR screens"/>
</dbReference>
<dbReference type="CD-CODE" id="D6A53B8E">
    <property type="entry name" value="Nuclear pore complex"/>
</dbReference>
<dbReference type="ChiTaRS" id="NUP107">
    <property type="organism name" value="human"/>
</dbReference>
<dbReference type="EvolutionaryTrace" id="P57740"/>
<dbReference type="GeneWiki" id="NUP107"/>
<dbReference type="GenomeRNAi" id="57122"/>
<dbReference type="Pharos" id="P57740">
    <property type="development level" value="Tbio"/>
</dbReference>
<dbReference type="PRO" id="PR:P57740"/>
<dbReference type="Proteomes" id="UP000005640">
    <property type="component" value="Chromosome 12"/>
</dbReference>
<dbReference type="RNAct" id="P57740">
    <property type="molecule type" value="protein"/>
</dbReference>
<dbReference type="Bgee" id="ENSG00000111581">
    <property type="expression patterns" value="Expressed in secondary oocyte and 197 other cell types or tissues"/>
</dbReference>
<dbReference type="ExpressionAtlas" id="P57740">
    <property type="expression patterns" value="baseline and differential"/>
</dbReference>
<dbReference type="GO" id="GO:0005829">
    <property type="term" value="C:cytosol"/>
    <property type="evidence" value="ECO:0000304"/>
    <property type="project" value="Reactome"/>
</dbReference>
<dbReference type="GO" id="GO:0000776">
    <property type="term" value="C:kinetochore"/>
    <property type="evidence" value="ECO:0007669"/>
    <property type="project" value="UniProtKB-KW"/>
</dbReference>
<dbReference type="GO" id="GO:0016020">
    <property type="term" value="C:membrane"/>
    <property type="evidence" value="ECO:0007005"/>
    <property type="project" value="UniProtKB"/>
</dbReference>
<dbReference type="GO" id="GO:0005635">
    <property type="term" value="C:nuclear envelope"/>
    <property type="evidence" value="ECO:0000314"/>
    <property type="project" value="ComplexPortal"/>
</dbReference>
<dbReference type="GO" id="GO:0031965">
    <property type="term" value="C:nuclear membrane"/>
    <property type="evidence" value="ECO:0000314"/>
    <property type="project" value="UniProtKB"/>
</dbReference>
<dbReference type="GO" id="GO:0034399">
    <property type="term" value="C:nuclear periphery"/>
    <property type="evidence" value="ECO:0000314"/>
    <property type="project" value="UniProtKB"/>
</dbReference>
<dbReference type="GO" id="GO:0005643">
    <property type="term" value="C:nuclear pore"/>
    <property type="evidence" value="ECO:0000314"/>
    <property type="project" value="UniProtKB"/>
</dbReference>
<dbReference type="GO" id="GO:0031080">
    <property type="term" value="C:nuclear pore outer ring"/>
    <property type="evidence" value="ECO:0000314"/>
    <property type="project" value="UniProtKB"/>
</dbReference>
<dbReference type="GO" id="GO:0017056">
    <property type="term" value="F:structural constituent of nuclear pore"/>
    <property type="evidence" value="ECO:0000314"/>
    <property type="project" value="UniProtKB"/>
</dbReference>
<dbReference type="GO" id="GO:0008585">
    <property type="term" value="P:female gonad development"/>
    <property type="evidence" value="ECO:0000315"/>
    <property type="project" value="UniProtKB"/>
</dbReference>
<dbReference type="GO" id="GO:0006406">
    <property type="term" value="P:mRNA export from nucleus"/>
    <property type="evidence" value="ECO:0000314"/>
    <property type="project" value="UniProtKB"/>
</dbReference>
<dbReference type="GO" id="GO:0072006">
    <property type="term" value="P:nephron development"/>
    <property type="evidence" value="ECO:0000315"/>
    <property type="project" value="UniProtKB"/>
</dbReference>
<dbReference type="GO" id="GO:0051292">
    <property type="term" value="P:nuclear pore complex assembly"/>
    <property type="evidence" value="ECO:0000315"/>
    <property type="project" value="UniProtKB"/>
</dbReference>
<dbReference type="GO" id="GO:0006913">
    <property type="term" value="P:nucleocytoplasmic transport"/>
    <property type="evidence" value="ECO:0000303"/>
    <property type="project" value="ComplexPortal"/>
</dbReference>
<dbReference type="GO" id="GO:0000973">
    <property type="term" value="P:post-transcriptional tethering of RNA polymerase II gene DNA at nuclear periphery"/>
    <property type="evidence" value="ECO:0000318"/>
    <property type="project" value="GO_Central"/>
</dbReference>
<dbReference type="GO" id="GO:0006606">
    <property type="term" value="P:protein import into nucleus"/>
    <property type="evidence" value="ECO:0000318"/>
    <property type="project" value="GO_Central"/>
</dbReference>
<dbReference type="FunFam" id="1.10.3450.20:FF:000001">
    <property type="entry name" value="Nuclear pore complex protein"/>
    <property type="match status" value="1"/>
</dbReference>
<dbReference type="FunFam" id="1.20.190.50:FF:000001">
    <property type="entry name" value="Nuclear pore complex protein"/>
    <property type="match status" value="1"/>
</dbReference>
<dbReference type="Gene3D" id="1.10.3450.20">
    <property type="match status" value="1"/>
</dbReference>
<dbReference type="Gene3D" id="1.20.190.50">
    <property type="match status" value="1"/>
</dbReference>
<dbReference type="InterPro" id="IPR007252">
    <property type="entry name" value="Nup84/Nup107"/>
</dbReference>
<dbReference type="PANTHER" id="PTHR13003:SF2">
    <property type="entry name" value="NUCLEAR PORE COMPLEX PROTEIN NUP107"/>
    <property type="match status" value="1"/>
</dbReference>
<dbReference type="PANTHER" id="PTHR13003">
    <property type="entry name" value="NUP107-RELATED"/>
    <property type="match status" value="1"/>
</dbReference>
<dbReference type="Pfam" id="PF04121">
    <property type="entry name" value="Nup84_Nup100"/>
    <property type="match status" value="1"/>
</dbReference>
<accession>P57740</accession>
<accession>B4DZ67</accession>
<accession>Q6PJE1</accession>
<organism>
    <name type="scientific">Homo sapiens</name>
    <name type="common">Human</name>
    <dbReference type="NCBI Taxonomy" id="9606"/>
    <lineage>
        <taxon>Eukaryota</taxon>
        <taxon>Metazoa</taxon>
        <taxon>Chordata</taxon>
        <taxon>Craniata</taxon>
        <taxon>Vertebrata</taxon>
        <taxon>Euteleostomi</taxon>
        <taxon>Mammalia</taxon>
        <taxon>Eutheria</taxon>
        <taxon>Euarchontoglires</taxon>
        <taxon>Primates</taxon>
        <taxon>Haplorrhini</taxon>
        <taxon>Catarrhini</taxon>
        <taxon>Hominidae</taxon>
        <taxon>Homo</taxon>
    </lineage>
</organism>
<gene>
    <name type="primary">NUP107</name>
</gene>
<name>NU107_HUMAN</name>
<keyword id="KW-0002">3D-structure</keyword>
<keyword id="KW-0007">Acetylation</keyword>
<keyword id="KW-0025">Alternative splicing</keyword>
<keyword id="KW-0137">Centromere</keyword>
<keyword id="KW-0158">Chromosome</keyword>
<keyword id="KW-0225">Disease variant</keyword>
<keyword id="KW-0887">Epilepsy</keyword>
<keyword id="KW-0991">Intellectual disability</keyword>
<keyword id="KW-0995">Kinetochore</keyword>
<keyword id="KW-0472">Membrane</keyword>
<keyword id="KW-0488">Methylation</keyword>
<keyword id="KW-0509">mRNA transport</keyword>
<keyword id="KW-0906">Nuclear pore complex</keyword>
<keyword id="KW-0539">Nucleus</keyword>
<keyword id="KW-0597">Phosphoprotein</keyword>
<keyword id="KW-0653">Protein transport</keyword>
<keyword id="KW-1267">Proteomics identification</keyword>
<keyword id="KW-1185">Reference proteome</keyword>
<keyword id="KW-0811">Translocation</keyword>
<keyword id="KW-0813">Transport</keyword>
<protein>
    <recommendedName>
        <fullName>Nuclear pore complex protein Nup107</fullName>
    </recommendedName>
    <alternativeName>
        <fullName>107 kDa nucleoporin</fullName>
    </alternativeName>
    <alternativeName>
        <fullName>Nucleoporin Nup107</fullName>
    </alternativeName>
</protein>
<feature type="chain" id="PRO_0000204831" description="Nuclear pore complex protein Nup107">
    <location>
        <begin position="1"/>
        <end position="925"/>
    </location>
</feature>
<feature type="region of interest" description="Disordered" evidence="2">
    <location>
        <begin position="20"/>
        <end position="66"/>
    </location>
</feature>
<feature type="compositionally biased region" description="Polar residues" evidence="2">
    <location>
        <begin position="35"/>
        <end position="49"/>
    </location>
</feature>
<feature type="compositionally biased region" description="Polar residues" evidence="2">
    <location>
        <begin position="55"/>
        <end position="66"/>
    </location>
</feature>
<feature type="modified residue" description="N-acetylmethionine" evidence="22">
    <location>
        <position position="1"/>
    </location>
</feature>
<feature type="modified residue" description="Phosphoserine" evidence="20 22 23">
    <location>
        <position position="4"/>
    </location>
</feature>
<feature type="modified residue" description="Phosphoserine" evidence="23">
    <location>
        <position position="10"/>
    </location>
</feature>
<feature type="modified residue" description="Phosphoserine" evidence="20 22 23">
    <location>
        <position position="11"/>
    </location>
</feature>
<feature type="modified residue" description="Phosphoserine" evidence="19 20 21 23">
    <location>
        <position position="37"/>
    </location>
</feature>
<feature type="modified residue" description="Phosphothreonine" evidence="17 20 21 22">
    <location>
        <position position="46"/>
    </location>
</feature>
<feature type="modified residue" description="Phosphothreonine" evidence="20">
    <location>
        <position position="55"/>
    </location>
</feature>
<feature type="modified residue" description="Phosphoserine" evidence="23">
    <location>
        <position position="57"/>
    </location>
</feature>
<feature type="modified residue" description="Phosphoserine" evidence="20 23">
    <location>
        <position position="58"/>
    </location>
</feature>
<feature type="modified residue" description="Asymmetric dimethylarginine; alternate" evidence="1">
    <location>
        <position position="60"/>
    </location>
</feature>
<feature type="modified residue" description="Omega-N-methylarginine; alternate" evidence="24">
    <location>
        <position position="60"/>
    </location>
</feature>
<feature type="modified residue" description="Phosphothreonine" evidence="20 23">
    <location>
        <position position="64"/>
    </location>
</feature>
<feature type="modified residue" description="Omega-N-methylarginine" evidence="1">
    <location>
        <position position="68"/>
    </location>
</feature>
<feature type="modified residue" description="Phosphoserine" evidence="20">
    <location>
        <position position="69"/>
    </location>
</feature>
<feature type="modified residue" description="Phosphoserine" evidence="18 20 23">
    <location>
        <position position="86"/>
    </location>
</feature>
<feature type="splice variant" id="VSP_054262" description="In isoform 3." evidence="15">
    <location>
        <begin position="1"/>
        <end position="151"/>
    </location>
</feature>
<feature type="splice variant" id="VSP_054263" description="In isoform 2." evidence="14">
    <original>MDRSGFGEISSPVIREAEVTRTARKQSAQKRVLLQASQDENFGNTTPRNQVIPRTPSSFRQPF</original>
    <variation>MKILVILHQETRLSLELLAHFDSLVLSTNLLFIV</variation>
    <location>
        <begin position="1"/>
        <end position="63"/>
    </location>
</feature>
<feature type="splice variant" id="VSP_054264" description="In isoform 3." evidence="15">
    <location>
        <begin position="579"/>
        <end position="666"/>
    </location>
</feature>
<feature type="sequence variant" id="VAR_081356" description="In GAMOS7; decreased function in nephrogenesis; unable to fully rescue morpholino-induced nephrogenesis defects in Xenopus; decreased protein amount detected by Western blot in patient cells; affects exon 4 splicing resulting in decreased levels of wild-type mature transcript; impairs assembly of nuclear pore complex; dbSNP:rs730882216." evidence="10 11 12">
    <original>M</original>
    <variation>I</variation>
    <location>
        <position position="101"/>
    </location>
</feature>
<feature type="sequence variant" id="VAR_076358" description="In NPHS11; no effect on interaction with NUP133; no effect on localization to the nuclear pore; dbSNP:rs864321633." evidence="8">
    <original>D</original>
    <variation>Y</variation>
    <location>
        <position position="157"/>
    </location>
</feature>
<feature type="sequence variant" id="VAR_089838" description="In ODG6; uncertain significance; dbSNP:rs747135247." evidence="13">
    <original>R</original>
    <variation>H</variation>
    <location>
        <position position="355"/>
    </location>
</feature>
<feature type="sequence variant" id="VAR_082054" description="In GAMOS7; uncertain significance; dbSNP:rs745342141." evidence="10">
    <original>C</original>
    <variation>Y</variation>
    <location>
        <position position="442"/>
    </location>
</feature>
<feature type="sequence variant" id="VAR_078571" description="In ODG6; dbSNP:rs1555178358." evidence="9">
    <original>D</original>
    <variation>N</variation>
    <location>
        <position position="447"/>
    </location>
</feature>
<feature type="sequence variant" id="VAR_081357" description="In NPHS11; uncertain significance." evidence="12">
    <location>
        <position position="710"/>
    </location>
</feature>
<feature type="sequence variant" id="VAR_076359" description="In NPHS11; decreased interaction with NUP133; changed localization to the nuclear pore with relocalization to the cytoplasm; dbSNP:rs864321632." evidence="8">
    <original>D</original>
    <variation>A</variation>
    <location>
        <position position="831"/>
    </location>
</feature>
<feature type="sequence variant" id="VAR_081358" description="In NPHS11; decreased function in nephrogenesis; unable to fully rescue morpholino-induced nephrogenesis defects in Xenopus; decreased interaction with NUP133; dbSNP:rs1565707103." evidence="12">
    <original>Y</original>
    <variation>C</variation>
    <location>
        <position position="889"/>
    </location>
</feature>
<feature type="sequence conflict" description="In Ref. 4; AAH43343." evidence="16" ref="4">
    <original>Q</original>
    <variation>R</variation>
    <location>
        <position position="845"/>
    </location>
</feature>
<feature type="helix" evidence="25">
    <location>
        <begin position="668"/>
        <end position="680"/>
    </location>
</feature>
<feature type="helix" evidence="25">
    <location>
        <begin position="682"/>
        <end position="684"/>
    </location>
</feature>
<feature type="helix" evidence="25">
    <location>
        <begin position="685"/>
        <end position="701"/>
    </location>
</feature>
<feature type="helix" evidence="25">
    <location>
        <begin position="705"/>
        <end position="714"/>
    </location>
</feature>
<feature type="helix" evidence="25">
    <location>
        <begin position="719"/>
        <end position="723"/>
    </location>
</feature>
<feature type="helix" evidence="25">
    <location>
        <begin position="738"/>
        <end position="767"/>
    </location>
</feature>
<feature type="helix" evidence="25">
    <location>
        <begin position="782"/>
        <end position="821"/>
    </location>
</feature>
<feature type="turn" evidence="25">
    <location>
        <begin position="824"/>
        <end position="826"/>
    </location>
</feature>
<feature type="helix" evidence="25">
    <location>
        <begin position="840"/>
        <end position="867"/>
    </location>
</feature>
<feature type="helix" evidence="25">
    <location>
        <begin position="871"/>
        <end position="875"/>
    </location>
</feature>
<feature type="helix" evidence="25">
    <location>
        <begin position="877"/>
        <end position="882"/>
    </location>
</feature>
<feature type="turn" evidence="25">
    <location>
        <begin position="884"/>
        <end position="886"/>
    </location>
</feature>
<feature type="helix" evidence="25">
    <location>
        <begin position="888"/>
        <end position="891"/>
    </location>
</feature>
<feature type="helix" evidence="25">
    <location>
        <begin position="894"/>
        <end position="912"/>
    </location>
</feature>
<feature type="turn" evidence="25">
    <location>
        <begin position="913"/>
        <end position="915"/>
    </location>
</feature>
<comment type="function">
    <text evidence="5 7 12">Plays a role in the nuclear pore complex (NPC) assembly and/or maintenance (PubMed:12552102, PubMed:15229283, PubMed:30179222). Required for the assembly of peripheral proteins into the NPC (PubMed:12552102, PubMed:15229283). May anchor NUP62 to the NPC (PubMed:15229283). Involved in nephrogenesis (PubMed:30179222).</text>
</comment>
<comment type="subunit">
    <text evidence="1 3 4 6 7 8 12">Part of the nuclear pore complex (NPC) (PubMed:11564755, PubMed:12802065, PubMed:15229283, PubMed:26411495). Forms part of the Nup160 subcomplex in the nuclear pore which is composed of NUP160, NUP133, NUP107 and Nup96; this complex plays a role in RNA export and in tethering Nup98 and NUP153 to the nucleus (PubMed:11564755, PubMed:11684705, PubMed:26411495, PubMed:30179222). Does not interact with TPR (PubMed:12802065). Interacts with ZNF106 (By similarity).</text>
</comment>
<comment type="interaction">
    <interactant intactId="EBI-295687">
        <id>P57740</id>
    </interactant>
    <interactant intactId="EBI-295695">
        <id>Q8WUM0</id>
        <label>NUP133</label>
    </interactant>
    <organismsDiffer>false</organismsDiffer>
    <experiments>17</experiments>
</comment>
<comment type="subcellular location">
    <subcellularLocation>
        <location evidence="3 6 7 8">Nucleus membrane</location>
    </subcellularLocation>
    <subcellularLocation>
        <location evidence="3 6 7 8">Nucleus</location>
        <location evidence="3 6 7 8">Nuclear pore complex</location>
    </subcellularLocation>
    <subcellularLocation>
        <location evidence="3">Chromosome</location>
        <location evidence="3">Centromere</location>
        <location evidence="3">Kinetochore</location>
    </subcellularLocation>
    <text evidence="3">Located on both the cytoplasmic and nuclear sides of the NPC core structure (PubMed:11564755). During mitosis, localizes to the kinetochores (PubMed:11564755). Dissociates from the dissasembled NPC structure late during prophase of mitosis (PubMed:11564755).</text>
</comment>
<comment type="alternative products">
    <event type="alternative splicing"/>
    <isoform>
        <id>P57740-1</id>
        <name>1</name>
        <sequence type="displayed"/>
    </isoform>
    <isoform>
        <id>P57740-2</id>
        <name>2</name>
        <sequence type="described" ref="VSP_054263"/>
    </isoform>
    <isoform>
        <id>P57740-3</id>
        <name>3</name>
        <sequence type="described" ref="VSP_054262 VSP_054264"/>
    </isoform>
</comment>
<comment type="tissue specificity">
    <text evidence="8">Ubiquitously expressed in fetal and adult tissues.</text>
</comment>
<comment type="disease" evidence="8 12">
    <disease id="DI-04623">
        <name>Nephrotic syndrome 11</name>
        <acronym>NPHS11</acronym>
        <description>A form of nephrotic syndrome, a renal disease clinically characterized by severe proteinuria, resulting in complications such as hypoalbuminemia, hyperlipidemia and edema. Kidney biopsies show non-specific histologic changes such as focal segmental glomerulosclerosis and diffuse mesangial proliferation. Some affected individuals have an inherited steroid-resistant form and progress to end-stage renal failure. NPHS11 is an autosomal recessive, steroid-resistant and progressive form with onset in the first decade of life.</description>
        <dbReference type="MIM" id="616730"/>
    </disease>
    <text>The disease is caused by variants affecting the gene represented in this entry.</text>
</comment>
<comment type="disease" evidence="9 13">
    <disease id="DI-05300">
        <name>Ovarian dysgenesis 6</name>
        <acronym>ODG6</acronym>
        <description>A form of ovarian dysgenesis, a disorder characterized by lack of spontaneous pubertal development, primary amenorrhea, uterine hypoplasia, and hypergonadotropic hypogonadism as a result of streak gonads. ODG6 is an autosomal recessive condition.</description>
        <dbReference type="MIM" id="618078"/>
    </disease>
    <text>The disease may be caused by variants affecting the gene represented in this entry.</text>
</comment>
<comment type="disease" evidence="10 11 12">
    <disease id="DI-05499">
        <name>Galloway-Mowat syndrome 7</name>
        <acronym>GAMOS7</acronym>
        <description>A form of Galloway-Mowat syndrome, a severe renal-neurological disease characterized by early-onset nephrotic syndrome associated with microcephaly, central nervous system abnormalities, developmental delays, and a propensity for seizures. Brain anomalies include gyration defects ranging from lissencephaly to pachygyria and polymicrogyria, and cerebellar hypoplasia. Most patients show facial dysmorphism characterized by a small, narrow forehead, large/floppy ears, deep-set eyes, hypertelorism and micrognathia. Additional variable features are visual impairment and arachnodactyly. Most patients die in early childhood. GAMOS7 inheritance is autosomal recessive.</description>
        <dbReference type="MIM" id="618348"/>
    </disease>
    <text>The disease is caused by variants affecting the gene represented in this entry.</text>
</comment>
<comment type="similarity">
    <text evidence="16">Belongs to the nucleoporin Nup84/Nup107 family.</text>
</comment>